<gene>
    <name evidence="1" type="primary">rbcL</name>
</gene>
<reference key="1">
    <citation type="journal article" date="1992" name="Proc. Natl. Acad. Sci. U.S.A.">
        <title>Extensive variation in evolutionary rate of rbcL gene sequences among seed plants.</title>
        <authorList>
            <person name="Bousquet J."/>
            <person name="Strauss S.H."/>
            <person name="Doerksen A.H."/>
            <person name="Price R.A."/>
        </authorList>
    </citation>
    <scope>NUCLEOTIDE SEQUENCE [GENOMIC DNA]</scope>
</reference>
<evidence type="ECO:0000255" key="1">
    <source>
        <dbReference type="HAMAP-Rule" id="MF_01338"/>
    </source>
</evidence>
<dbReference type="EC" id="4.1.1.39" evidence="1"/>
<dbReference type="EMBL" id="X58131">
    <property type="protein sequence ID" value="CAA41139.1"/>
    <property type="molecule type" value="Genomic_DNA"/>
</dbReference>
<dbReference type="PIR" id="C46161">
    <property type="entry name" value="RKSZLH"/>
</dbReference>
<dbReference type="SMR" id="P24676"/>
<dbReference type="GO" id="GO:0009507">
    <property type="term" value="C:chloroplast"/>
    <property type="evidence" value="ECO:0007669"/>
    <property type="project" value="UniProtKB-SubCell"/>
</dbReference>
<dbReference type="GO" id="GO:0000287">
    <property type="term" value="F:magnesium ion binding"/>
    <property type="evidence" value="ECO:0007669"/>
    <property type="project" value="UniProtKB-UniRule"/>
</dbReference>
<dbReference type="GO" id="GO:0004497">
    <property type="term" value="F:monooxygenase activity"/>
    <property type="evidence" value="ECO:0007669"/>
    <property type="project" value="UniProtKB-KW"/>
</dbReference>
<dbReference type="GO" id="GO:0016984">
    <property type="term" value="F:ribulose-bisphosphate carboxylase activity"/>
    <property type="evidence" value="ECO:0007669"/>
    <property type="project" value="UniProtKB-UniRule"/>
</dbReference>
<dbReference type="GO" id="GO:0009853">
    <property type="term" value="P:photorespiration"/>
    <property type="evidence" value="ECO:0007669"/>
    <property type="project" value="UniProtKB-KW"/>
</dbReference>
<dbReference type="GO" id="GO:0019253">
    <property type="term" value="P:reductive pentose-phosphate cycle"/>
    <property type="evidence" value="ECO:0007669"/>
    <property type="project" value="UniProtKB-UniRule"/>
</dbReference>
<dbReference type="CDD" id="cd08212">
    <property type="entry name" value="RuBisCO_large_I"/>
    <property type="match status" value="1"/>
</dbReference>
<dbReference type="FunFam" id="3.20.20.110:FF:000001">
    <property type="entry name" value="Ribulose bisphosphate carboxylase large chain"/>
    <property type="match status" value="1"/>
</dbReference>
<dbReference type="FunFam" id="3.30.70.150:FF:000001">
    <property type="entry name" value="Ribulose bisphosphate carboxylase large chain"/>
    <property type="match status" value="1"/>
</dbReference>
<dbReference type="Gene3D" id="3.20.20.110">
    <property type="entry name" value="Ribulose bisphosphate carboxylase, large subunit, C-terminal domain"/>
    <property type="match status" value="1"/>
</dbReference>
<dbReference type="Gene3D" id="3.30.70.150">
    <property type="entry name" value="RuBisCO large subunit, N-terminal domain"/>
    <property type="match status" value="1"/>
</dbReference>
<dbReference type="HAMAP" id="MF_01338">
    <property type="entry name" value="RuBisCO_L_type1"/>
    <property type="match status" value="1"/>
</dbReference>
<dbReference type="InterPro" id="IPR033966">
    <property type="entry name" value="RuBisCO"/>
</dbReference>
<dbReference type="InterPro" id="IPR020878">
    <property type="entry name" value="RuBisCo_large_chain_AS"/>
</dbReference>
<dbReference type="InterPro" id="IPR000685">
    <property type="entry name" value="RuBisCO_lsu_C"/>
</dbReference>
<dbReference type="InterPro" id="IPR036376">
    <property type="entry name" value="RuBisCO_lsu_C_sf"/>
</dbReference>
<dbReference type="InterPro" id="IPR017443">
    <property type="entry name" value="RuBisCO_lsu_fd_N"/>
</dbReference>
<dbReference type="InterPro" id="IPR036422">
    <property type="entry name" value="RuBisCO_lsu_N_sf"/>
</dbReference>
<dbReference type="InterPro" id="IPR020888">
    <property type="entry name" value="RuBisCO_lsuI"/>
</dbReference>
<dbReference type="NCBIfam" id="NF003252">
    <property type="entry name" value="PRK04208.1"/>
    <property type="match status" value="1"/>
</dbReference>
<dbReference type="PANTHER" id="PTHR42704">
    <property type="entry name" value="RIBULOSE BISPHOSPHATE CARBOXYLASE"/>
    <property type="match status" value="1"/>
</dbReference>
<dbReference type="PANTHER" id="PTHR42704:SF15">
    <property type="entry name" value="RIBULOSE BISPHOSPHATE CARBOXYLASE LARGE CHAIN"/>
    <property type="match status" value="1"/>
</dbReference>
<dbReference type="Pfam" id="PF00016">
    <property type="entry name" value="RuBisCO_large"/>
    <property type="match status" value="1"/>
</dbReference>
<dbReference type="Pfam" id="PF02788">
    <property type="entry name" value="RuBisCO_large_N"/>
    <property type="match status" value="1"/>
</dbReference>
<dbReference type="SFLD" id="SFLDG01052">
    <property type="entry name" value="RuBisCO"/>
    <property type="match status" value="1"/>
</dbReference>
<dbReference type="SFLD" id="SFLDS00014">
    <property type="entry name" value="RuBisCO"/>
    <property type="match status" value="1"/>
</dbReference>
<dbReference type="SFLD" id="SFLDG00301">
    <property type="entry name" value="RuBisCO-like_proteins"/>
    <property type="match status" value="1"/>
</dbReference>
<dbReference type="SUPFAM" id="SSF51649">
    <property type="entry name" value="RuBisCo, C-terminal domain"/>
    <property type="match status" value="1"/>
</dbReference>
<dbReference type="SUPFAM" id="SSF54966">
    <property type="entry name" value="RuBisCO, large subunit, small (N-terminal) domain"/>
    <property type="match status" value="1"/>
</dbReference>
<dbReference type="PROSITE" id="PS00157">
    <property type="entry name" value="RUBISCO_LARGE"/>
    <property type="match status" value="1"/>
</dbReference>
<sequence>MSPKTETKASVGFKAGVKDYRLTYYTPEYQTKDTDILAAFRVTPQPGVPAEEAGAAVAAESSTGTWTTVWTDGLTSLDRYKGRCYDIEPVPGEENQFIAYVAYPLDLFEEGSVTNLFTSIVGNVFGFKALRALRLEDLRIPPAYSKTFQGPPHGIQVERDKLNKYGRPLLGCTIKPKLGLSAKNYGRAVYECLRGGLDFTKDDENVNSQPFMRWRDRFVFCAEAINKAQAETGEIKGHYLNATAGTCEEMMKRAVFARELGVPIVMHDYLTGGFTANTSLAHYCRDNGLLLHIHRAMHAVIDRQRNHGMHFRVLAKALRMSGGDHVHAGTVVGKLEGERDVTLGFVDLLRDDFIEKDRSRGVYFTQDWVSMPGVLPVASGGIHVWHMPALTEIFGDDSVLQFGGGTLGHPWGNAPGAAANRVALEACVQARNEGRDLAREGNEVIREACKWSPELAAACEIWKEIKFEFDVIDRL</sequence>
<accession>P24676</accession>
<feature type="propeptide" id="PRO_0000031359" evidence="1">
    <location>
        <begin position="1"/>
        <end position="2"/>
    </location>
</feature>
<feature type="chain" id="PRO_0000031360" description="Ribulose bisphosphate carboxylase large chain">
    <location>
        <begin position="3"/>
        <end position="475"/>
    </location>
</feature>
<feature type="active site" description="Proton acceptor" evidence="1">
    <location>
        <position position="175"/>
    </location>
</feature>
<feature type="active site" description="Proton acceptor" evidence="1">
    <location>
        <position position="294"/>
    </location>
</feature>
<feature type="binding site" description="in homodimeric partner" evidence="1">
    <location>
        <position position="123"/>
    </location>
    <ligand>
        <name>substrate</name>
    </ligand>
</feature>
<feature type="binding site" evidence="1">
    <location>
        <position position="173"/>
    </location>
    <ligand>
        <name>substrate</name>
    </ligand>
</feature>
<feature type="binding site" evidence="1">
    <location>
        <position position="177"/>
    </location>
    <ligand>
        <name>substrate</name>
    </ligand>
</feature>
<feature type="binding site" description="via carbamate group" evidence="1">
    <location>
        <position position="201"/>
    </location>
    <ligand>
        <name>Mg(2+)</name>
        <dbReference type="ChEBI" id="CHEBI:18420"/>
    </ligand>
</feature>
<feature type="binding site" evidence="1">
    <location>
        <position position="203"/>
    </location>
    <ligand>
        <name>Mg(2+)</name>
        <dbReference type="ChEBI" id="CHEBI:18420"/>
    </ligand>
</feature>
<feature type="binding site" evidence="1">
    <location>
        <position position="204"/>
    </location>
    <ligand>
        <name>Mg(2+)</name>
        <dbReference type="ChEBI" id="CHEBI:18420"/>
    </ligand>
</feature>
<feature type="binding site" evidence="1">
    <location>
        <position position="295"/>
    </location>
    <ligand>
        <name>substrate</name>
    </ligand>
</feature>
<feature type="binding site" evidence="1">
    <location>
        <position position="327"/>
    </location>
    <ligand>
        <name>substrate</name>
    </ligand>
</feature>
<feature type="binding site" evidence="1">
    <location>
        <position position="379"/>
    </location>
    <ligand>
        <name>substrate</name>
    </ligand>
</feature>
<feature type="site" description="Transition state stabilizer" evidence="1">
    <location>
        <position position="334"/>
    </location>
</feature>
<feature type="modified residue" description="N-acetylproline" evidence="1">
    <location>
        <position position="3"/>
    </location>
</feature>
<feature type="modified residue" description="N6,N6,N6-trimethyllysine" evidence="1">
    <location>
        <position position="14"/>
    </location>
</feature>
<feature type="modified residue" description="N6-carboxylysine" evidence="1">
    <location>
        <position position="201"/>
    </location>
</feature>
<feature type="disulfide bond" description="Interchain; in linked form" evidence="1">
    <location>
        <position position="247"/>
    </location>
</feature>
<keyword id="KW-0007">Acetylation</keyword>
<keyword id="KW-0113">Calvin cycle</keyword>
<keyword id="KW-0120">Carbon dioxide fixation</keyword>
<keyword id="KW-0150">Chloroplast</keyword>
<keyword id="KW-1015">Disulfide bond</keyword>
<keyword id="KW-0456">Lyase</keyword>
<keyword id="KW-0460">Magnesium</keyword>
<keyword id="KW-0479">Metal-binding</keyword>
<keyword id="KW-0488">Methylation</keyword>
<keyword id="KW-0503">Monooxygenase</keyword>
<keyword id="KW-0560">Oxidoreductase</keyword>
<keyword id="KW-0601">Photorespiration</keyword>
<keyword id="KW-0602">Photosynthesis</keyword>
<keyword id="KW-0934">Plastid</keyword>
<geneLocation type="chloroplast"/>
<organism>
    <name type="scientific">Pinus wallichiana</name>
    <name type="common">Himalayan white pine</name>
    <name type="synonym">Pinus griffithii</name>
    <dbReference type="NCBI Taxonomy" id="3341"/>
    <lineage>
        <taxon>Eukaryota</taxon>
        <taxon>Viridiplantae</taxon>
        <taxon>Streptophyta</taxon>
        <taxon>Embryophyta</taxon>
        <taxon>Tracheophyta</taxon>
        <taxon>Spermatophyta</taxon>
        <taxon>Pinopsida</taxon>
        <taxon>Pinidae</taxon>
        <taxon>Conifers I</taxon>
        <taxon>Pinales</taxon>
        <taxon>Pinaceae</taxon>
        <taxon>Pinus</taxon>
        <taxon>Pinus subgen. Strobus</taxon>
    </lineage>
</organism>
<name>RBL_PINWA</name>
<protein>
    <recommendedName>
        <fullName evidence="1">Ribulose bisphosphate carboxylase large chain</fullName>
        <shortName evidence="1">RuBisCO large subunit</shortName>
        <ecNumber evidence="1">4.1.1.39</ecNumber>
    </recommendedName>
</protein>
<comment type="function">
    <text evidence="1">RuBisCO catalyzes two reactions: the carboxylation of D-ribulose 1,5-bisphosphate, the primary event in carbon dioxide fixation, as well as the oxidative fragmentation of the pentose substrate in the photorespiration process. Both reactions occur simultaneously and in competition at the same active site.</text>
</comment>
<comment type="catalytic activity">
    <reaction evidence="1">
        <text>2 (2R)-3-phosphoglycerate + 2 H(+) = D-ribulose 1,5-bisphosphate + CO2 + H2O</text>
        <dbReference type="Rhea" id="RHEA:23124"/>
        <dbReference type="ChEBI" id="CHEBI:15377"/>
        <dbReference type="ChEBI" id="CHEBI:15378"/>
        <dbReference type="ChEBI" id="CHEBI:16526"/>
        <dbReference type="ChEBI" id="CHEBI:57870"/>
        <dbReference type="ChEBI" id="CHEBI:58272"/>
        <dbReference type="EC" id="4.1.1.39"/>
    </reaction>
</comment>
<comment type="catalytic activity">
    <reaction evidence="1">
        <text>D-ribulose 1,5-bisphosphate + O2 = 2-phosphoglycolate + (2R)-3-phosphoglycerate + 2 H(+)</text>
        <dbReference type="Rhea" id="RHEA:36631"/>
        <dbReference type="ChEBI" id="CHEBI:15378"/>
        <dbReference type="ChEBI" id="CHEBI:15379"/>
        <dbReference type="ChEBI" id="CHEBI:57870"/>
        <dbReference type="ChEBI" id="CHEBI:58033"/>
        <dbReference type="ChEBI" id="CHEBI:58272"/>
    </reaction>
</comment>
<comment type="cofactor">
    <cofactor evidence="1">
        <name>Mg(2+)</name>
        <dbReference type="ChEBI" id="CHEBI:18420"/>
    </cofactor>
    <text evidence="1">Binds 1 Mg(2+) ion per subunit.</text>
</comment>
<comment type="subunit">
    <text evidence="1">Heterohexadecamer of 8 large chains and 8 small chains; disulfide-linked. The disulfide link is formed within the large subunit homodimers.</text>
</comment>
<comment type="subcellular location">
    <subcellularLocation>
        <location>Plastid</location>
        <location>Chloroplast</location>
    </subcellularLocation>
</comment>
<comment type="PTM">
    <text evidence="1">The disulfide bond which can form in the large chain dimeric partners within the hexadecamer appears to be associated with oxidative stress and protein turnover.</text>
</comment>
<comment type="miscellaneous">
    <text evidence="1">The basic functional RuBisCO is composed of a large chain homodimer in a 'head-to-tail' conformation. In form I RuBisCO this homodimer is arranged in a barrel-like tetramer with the small subunits forming a tetrameric 'cap' on each end of the 'barrel'.</text>
</comment>
<comment type="similarity">
    <text evidence="1">Belongs to the RuBisCO large chain family. Type I subfamily.</text>
</comment>
<proteinExistence type="inferred from homology"/>